<feature type="chain" id="PRO_0000186840" description="Uncharacterized protein aq_125">
    <location>
        <begin position="1"/>
        <end position="132"/>
    </location>
</feature>
<feature type="transmembrane region" description="Helical" evidence="1">
    <location>
        <begin position="7"/>
        <end position="29"/>
    </location>
</feature>
<feature type="transmembrane region" description="Helical" evidence="1">
    <location>
        <begin position="44"/>
        <end position="62"/>
    </location>
</feature>
<feature type="transmembrane region" description="Helical" evidence="1">
    <location>
        <begin position="69"/>
        <end position="88"/>
    </location>
</feature>
<feature type="transmembrane region" description="Helical" evidence="1">
    <location>
        <begin position="108"/>
        <end position="130"/>
    </location>
</feature>
<comment type="subcellular location">
    <subcellularLocation>
        <location evidence="2">Cell membrane</location>
        <topology evidence="2">Multi-pass membrane protein</topology>
    </subcellularLocation>
</comment>
<dbReference type="EMBL" id="AE000657">
    <property type="protein sequence ID" value="AAC06497.1"/>
    <property type="molecule type" value="Genomic_DNA"/>
</dbReference>
<dbReference type="PIR" id="B70312">
    <property type="entry name" value="B70312"/>
</dbReference>
<dbReference type="RefSeq" id="NP_213085.1">
    <property type="nucleotide sequence ID" value="NC_000918.1"/>
</dbReference>
<dbReference type="RefSeq" id="WP_010880023.1">
    <property type="nucleotide sequence ID" value="NC_000918.1"/>
</dbReference>
<dbReference type="STRING" id="224324.aq_125"/>
<dbReference type="EnsemblBacteria" id="AAC06497">
    <property type="protein sequence ID" value="AAC06497"/>
    <property type="gene ID" value="aq_125"/>
</dbReference>
<dbReference type="KEGG" id="aae:aq_125"/>
<dbReference type="HOGENOM" id="CLU_1914191_0_0_0"/>
<dbReference type="InParanoid" id="O66525"/>
<dbReference type="OrthoDB" id="5397209at2"/>
<dbReference type="Proteomes" id="UP000000798">
    <property type="component" value="Chromosome"/>
</dbReference>
<dbReference type="GO" id="GO:0005886">
    <property type="term" value="C:plasma membrane"/>
    <property type="evidence" value="ECO:0007669"/>
    <property type="project" value="UniProtKB-SubCell"/>
</dbReference>
<dbReference type="InterPro" id="IPR025423">
    <property type="entry name" value="TMEM205-like"/>
</dbReference>
<dbReference type="Pfam" id="PF13664">
    <property type="entry name" value="DUF4149"/>
    <property type="match status" value="1"/>
</dbReference>
<keyword id="KW-1003">Cell membrane</keyword>
<keyword id="KW-0472">Membrane</keyword>
<keyword id="KW-1185">Reference proteome</keyword>
<keyword id="KW-0812">Transmembrane</keyword>
<keyword id="KW-1133">Transmembrane helix</keyword>
<proteinExistence type="predicted"/>
<organism>
    <name type="scientific">Aquifex aeolicus (strain VF5)</name>
    <dbReference type="NCBI Taxonomy" id="224324"/>
    <lineage>
        <taxon>Bacteria</taxon>
        <taxon>Pseudomonadati</taxon>
        <taxon>Aquificota</taxon>
        <taxon>Aquificia</taxon>
        <taxon>Aquificales</taxon>
        <taxon>Aquificaceae</taxon>
        <taxon>Aquifex</taxon>
    </lineage>
</organism>
<gene>
    <name type="ordered locus">aq_125</name>
</gene>
<evidence type="ECO:0000255" key="1"/>
<evidence type="ECO:0000305" key="2"/>
<protein>
    <recommendedName>
        <fullName>Uncharacterized protein aq_125</fullName>
    </recommendedName>
</protein>
<accession>O66525</accession>
<reference key="1">
    <citation type="journal article" date="1998" name="Nature">
        <title>The complete genome of the hyperthermophilic bacterium Aquifex aeolicus.</title>
        <authorList>
            <person name="Deckert G."/>
            <person name="Warren P.V."/>
            <person name="Gaasterland T."/>
            <person name="Young W.G."/>
            <person name="Lenox A.L."/>
            <person name="Graham D.E."/>
            <person name="Overbeek R."/>
            <person name="Snead M.A."/>
            <person name="Keller M."/>
            <person name="Aujay M."/>
            <person name="Huber R."/>
            <person name="Feldman R.A."/>
            <person name="Short J.M."/>
            <person name="Olsen G.J."/>
            <person name="Swanson R.V."/>
        </authorList>
    </citation>
    <scope>NUCLEOTIDE SEQUENCE [LARGE SCALE GENOMIC DNA]</scope>
    <source>
        <strain>VF5</strain>
    </source>
</reference>
<name>Y125_AQUAE</name>
<sequence>MKEKLALALLSFFLGLGSFFSFYVAPTLFKVLERQQAGAVVEKVFPVYFGLGIILVGISLFLGRDSGKLFLSLGILNLLLLLLQEFIVIPKLHGLKATNYELFLKYHGVSMGINLAILLLTLGKVLILIFKR</sequence>